<comment type="function">
    <text evidence="1 4 5 6 7">Proton-selective ion channel (PubMed:31160780). Biphasically modulated by acid and alkali, mediating proton influx and efflux in response to extracellular acid and base stimulation, respectively (By similarity). May be involved in acid and base perception (By similarity). Sensor for ammonium chloride (NH(4)Cl) in taste receptor cells. NH(4)Cl acts by increasing the intracellular pH, thereby generating a driving force for proton entry through OTOP1 channel (PubMed:37798269). Plays a role in the regulation of Ca(2+) flux in response to purigenic (ATP, ADP and UDP) stimuli, leading to increase in cytosolic Ca(2+) due to influx of extracellular calcium. May play this role by inhibiting P2Y purinoceptor-mediated Ca(2+) release in a Ca(2+)-dependent manner and promote an influx of Ca(2+) in response to ATP. Through this mechanism and possibly others, plays a role in the formation and function of calcium carbonate-based structures in the vestibular system of the inner ear, called otoconia, that sense gravity and linear acceleration (PubMed:15480759, PubMed:15581873).</text>
</comment>
<comment type="catalytic activity">
    <reaction evidence="6 7">
        <text>H(+)(in) = H(+)(out)</text>
        <dbReference type="Rhea" id="RHEA:34979"/>
        <dbReference type="ChEBI" id="CHEBI:15378"/>
    </reaction>
</comment>
<comment type="activity regulation">
    <text evidence="1 7">Activated by both acid and alkali, with proton influx in response to extracellular acid and proton efflux during alkali stimulation. Inhibited by Zn(2+); this inhibition is thought to be pH-sensitive (PubMed:37798269). Currents evoked in response to mild acid (pH 6.0) stimulus may also be mildly potentiated by exposure to Zn(2+). Activated by NH(4)Cl (By similarity).</text>
</comment>
<comment type="subunit">
    <text evidence="6">Homodimer.</text>
</comment>
<comment type="interaction">
    <interactant intactId="EBI-22085919">
        <id>Q7ZWK8</id>
    </interactant>
    <interactant intactId="EBI-22085919">
        <id>Q7ZWK8</id>
        <label>otop1</label>
    </interactant>
    <organismsDiffer>false</organismsDiffer>
    <experiments>2</experiments>
</comment>
<comment type="subcellular location">
    <subcellularLocation>
        <location evidence="11">Cell membrane</location>
        <topology evidence="6">Multi-pass membrane protein</topology>
    </subcellularLocation>
    <subcellularLocation>
        <location evidence="1">Cell projection</location>
        <location evidence="1">Microvillus</location>
    </subcellularLocation>
    <text evidence="1">Found in the gelatinous membrane overlying the inner ear macular epithelium. Also detected in the apical microvilli in inner ear supporting cells.</text>
</comment>
<comment type="developmental stage">
    <text evidence="4 5">First detected in the otic placode at 16.5 hours post-fertilization (hpf). Detected in the developing inner ear sensory epithelium at 24 hpf. Detected in hair cells of the sensory epithelium at 4 days post-fertilization (dpf). At 5 dpf, levels are much reduced in the otolith organs, and not detectable at 7 dpf. Detected in neuromasts and in the lateral line system at 5 dpf and 7 dpf.</text>
</comment>
<comment type="domain">
    <text evidence="1">Residues involved in the gating by extracellular Zn (2+) and pH are located in the extracellular loops between transmembrane domain 5-6 and transmembrane domain 11-12.</text>
</comment>
<comment type="disruption phenotype">
    <text evidence="4 5 8">Fishes display the backstroke phenotype. Mutant fish exhibit otolith agenesis without additional effects on the sensory epithelium or other inner ear structures. Otoliths are essential for the perception of gravity and acceleration. Larvae without otoliths are unable to orient dorsal side up and rest mostly on their side in contact with the ground.</text>
</comment>
<comment type="similarity">
    <text evidence="10">Belongs to the otopetrin family.</text>
</comment>
<comment type="online information" name="Protein Spotlight">
    <link uri="https://www.proteinspotlight.org/back_issues/089"/>
    <text>Ear of stone - Issue 89 of December 2007</text>
</comment>
<dbReference type="EMBL" id="AY170648">
    <property type="protein sequence ID" value="AAN62756.1"/>
    <property type="molecule type" value="mRNA"/>
</dbReference>
<dbReference type="EMBL" id="AY744157">
    <property type="protein sequence ID" value="AAV91780.1"/>
    <property type="molecule type" value="mRNA"/>
</dbReference>
<dbReference type="EMBL" id="BC083445">
    <property type="protein sequence ID" value="AAH83445.1"/>
    <property type="molecule type" value="mRNA"/>
</dbReference>
<dbReference type="EMBL" id="BC164660">
    <property type="protein sequence ID" value="AAI64660.1"/>
    <property type="molecule type" value="mRNA"/>
</dbReference>
<dbReference type="RefSeq" id="NP_942098.1">
    <property type="nucleotide sequence ID" value="NM_198803.1"/>
</dbReference>
<dbReference type="SMR" id="Q7ZWK8"/>
<dbReference type="FunCoup" id="Q7ZWK8">
    <property type="interactions" value="1254"/>
</dbReference>
<dbReference type="TCDB" id="1.A.110.1.5">
    <property type="family name" value="the channel-forming otopetrin (otop) family"/>
</dbReference>
<dbReference type="GeneID" id="322893"/>
<dbReference type="KEGG" id="dre:322893"/>
<dbReference type="AGR" id="ZFIN:ZDB-GENE-030131-1613"/>
<dbReference type="CTD" id="133060"/>
<dbReference type="ZFIN" id="ZDB-GENE-030131-1613">
    <property type="gene designation" value="otop1"/>
</dbReference>
<dbReference type="InParanoid" id="Q7ZWK8"/>
<dbReference type="OrthoDB" id="6429739at2759"/>
<dbReference type="PhylomeDB" id="Q7ZWK8"/>
<dbReference type="PRO" id="PR:Q7ZWK8"/>
<dbReference type="Proteomes" id="UP000000437">
    <property type="component" value="Chromosome 14"/>
</dbReference>
<dbReference type="GO" id="GO:0016020">
    <property type="term" value="C:membrane"/>
    <property type="evidence" value="ECO:0000314"/>
    <property type="project" value="ZFIN"/>
</dbReference>
<dbReference type="GO" id="GO:0005902">
    <property type="term" value="C:microvillus"/>
    <property type="evidence" value="ECO:0007669"/>
    <property type="project" value="UniProtKB-SubCell"/>
</dbReference>
<dbReference type="GO" id="GO:0005886">
    <property type="term" value="C:plasma membrane"/>
    <property type="evidence" value="ECO:0000250"/>
    <property type="project" value="UniProtKB"/>
</dbReference>
<dbReference type="GO" id="GO:0015485">
    <property type="term" value="F:cholesterol binding"/>
    <property type="evidence" value="ECO:0000314"/>
    <property type="project" value="ZFIN"/>
</dbReference>
<dbReference type="GO" id="GO:0042802">
    <property type="term" value="F:identical protein binding"/>
    <property type="evidence" value="ECO:0000353"/>
    <property type="project" value="IntAct"/>
</dbReference>
<dbReference type="GO" id="GO:0015252">
    <property type="term" value="F:proton channel activity"/>
    <property type="evidence" value="ECO:0000314"/>
    <property type="project" value="ZFIN"/>
</dbReference>
<dbReference type="GO" id="GO:0032869">
    <property type="term" value="P:cellular response to insulin stimulus"/>
    <property type="evidence" value="ECO:0000250"/>
    <property type="project" value="UniProtKB"/>
</dbReference>
<dbReference type="GO" id="GO:0042472">
    <property type="term" value="P:inner ear morphogenesis"/>
    <property type="evidence" value="ECO:0000315"/>
    <property type="project" value="ZFIN"/>
</dbReference>
<dbReference type="GO" id="GO:0060336">
    <property type="term" value="P:negative regulation of type II interferon-mediated signaling pathway"/>
    <property type="evidence" value="ECO:0000250"/>
    <property type="project" value="UniProtKB"/>
</dbReference>
<dbReference type="GO" id="GO:0032475">
    <property type="term" value="P:otolith formation"/>
    <property type="evidence" value="ECO:0000315"/>
    <property type="project" value="ZFIN"/>
</dbReference>
<dbReference type="GO" id="GO:0045299">
    <property type="term" value="P:otolith mineralization"/>
    <property type="evidence" value="ECO:0000315"/>
    <property type="project" value="ZFIN"/>
</dbReference>
<dbReference type="GO" id="GO:1902600">
    <property type="term" value="P:proton transmembrane transport"/>
    <property type="evidence" value="ECO:0000314"/>
    <property type="project" value="ZFIN"/>
</dbReference>
<dbReference type="InterPro" id="IPR004878">
    <property type="entry name" value="Otopetrin"/>
</dbReference>
<dbReference type="PANTHER" id="PTHR21522">
    <property type="entry name" value="PROTON CHANNEL OTOP"/>
    <property type="match status" value="1"/>
</dbReference>
<dbReference type="PANTHER" id="PTHR21522:SF19">
    <property type="entry name" value="PROTON CHANNEL OTOP1"/>
    <property type="match status" value="1"/>
</dbReference>
<dbReference type="Pfam" id="PF03189">
    <property type="entry name" value="Otopetrin"/>
    <property type="match status" value="3"/>
</dbReference>
<gene>
    <name evidence="9" type="primary">otop1</name>
</gene>
<keyword id="KW-0091">Biomineralization</keyword>
<keyword id="KW-1003">Cell membrane</keyword>
<keyword id="KW-0966">Cell projection</keyword>
<keyword id="KW-0375">Hydrogen ion transport</keyword>
<keyword id="KW-0407">Ion channel</keyword>
<keyword id="KW-0406">Ion transport</keyword>
<keyword id="KW-0472">Membrane</keyword>
<keyword id="KW-1185">Reference proteome</keyword>
<keyword id="KW-0812">Transmembrane</keyword>
<keyword id="KW-1133">Transmembrane helix</keyword>
<keyword id="KW-0813">Transport</keyword>
<feature type="chain" id="PRO_0000313819" description="Proton channel OTOP1">
    <location>
        <begin position="1"/>
        <end position="586"/>
    </location>
</feature>
<feature type="topological domain" description="Cytoplasmic" evidence="10">
    <location>
        <begin position="1"/>
        <end position="52"/>
    </location>
</feature>
<feature type="transmembrane region" description="Helical; Name=1" evidence="2 6">
    <location>
        <begin position="53"/>
        <end position="74"/>
    </location>
</feature>
<feature type="topological domain" description="Extracellular" evidence="10">
    <location>
        <begin position="75"/>
        <end position="82"/>
    </location>
</feature>
<feature type="transmembrane region" description="Helical; Name=2" evidence="6">
    <location>
        <begin position="83"/>
        <end position="106"/>
    </location>
</feature>
<feature type="topological domain" description="Cytoplasmic" evidence="10">
    <location>
        <begin position="107"/>
        <end position="124"/>
    </location>
</feature>
<feature type="transmembrane region" description="Helical; Name=3" evidence="6">
    <location>
        <begin position="125"/>
        <end position="147"/>
    </location>
</feature>
<feature type="topological domain" description="Extracellular" evidence="10">
    <location>
        <begin position="148"/>
        <end position="157"/>
    </location>
</feature>
<feature type="transmembrane region" description="Helical; Name=4" evidence="6">
    <location>
        <begin position="158"/>
        <end position="182"/>
    </location>
</feature>
<feature type="topological domain" description="Cytoplasmic" evidence="10">
    <location>
        <begin position="183"/>
        <end position="190"/>
    </location>
</feature>
<feature type="transmembrane region" description="Helical; Name=5" evidence="6">
    <location>
        <begin position="191"/>
        <end position="217"/>
    </location>
</feature>
<feature type="topological domain" description="Extracellular" evidence="10">
    <location>
        <begin position="218"/>
        <end position="255"/>
    </location>
</feature>
<feature type="transmembrane region" description="Helical; Name=6" evidence="6">
    <location>
        <begin position="256"/>
        <end position="281"/>
    </location>
</feature>
<feature type="topological domain" description="Cytoplasmic" evidence="10">
    <location>
        <begin position="282"/>
        <end position="303"/>
    </location>
</feature>
<feature type="transmembrane region" description="Helical; Name=7" evidence="6">
    <location>
        <begin position="304"/>
        <end position="326"/>
    </location>
</feature>
<feature type="topological domain" description="Extracellular" evidence="10">
    <location>
        <begin position="327"/>
        <end position="336"/>
    </location>
</feature>
<feature type="transmembrane region" description="Helical; Name=8" evidence="6">
    <location>
        <begin position="337"/>
        <end position="362"/>
    </location>
</feature>
<feature type="topological domain" description="Cytoplasmic" evidence="10">
    <location>
        <begin position="363"/>
        <end position="380"/>
    </location>
</feature>
<feature type="transmembrane region" description="Helical; Name=9" evidence="6">
    <location>
        <begin position="381"/>
        <end position="405"/>
    </location>
</feature>
<feature type="topological domain" description="Extracellular" evidence="10">
    <location>
        <begin position="406"/>
        <end position="417"/>
    </location>
</feature>
<feature type="transmembrane region" description="Helical; Name=10" evidence="6">
    <location>
        <begin position="418"/>
        <end position="438"/>
    </location>
</feature>
<feature type="topological domain" description="Cytoplasmic" evidence="10">
    <location>
        <begin position="439"/>
        <end position="518"/>
    </location>
</feature>
<feature type="transmembrane region" description="Helical; Name=11" evidence="6">
    <location>
        <begin position="519"/>
        <end position="537"/>
    </location>
</feature>
<feature type="topological domain" description="Extracellular" evidence="10">
    <location>
        <begin position="538"/>
        <end position="555"/>
    </location>
</feature>
<feature type="transmembrane region" description="Helical; Name=12" evidence="6">
    <location>
        <begin position="556"/>
        <end position="579"/>
    </location>
</feature>
<feature type="topological domain" description="Cytoplasmic" evidence="10">
    <location>
        <begin position="580"/>
        <end position="586"/>
    </location>
</feature>
<feature type="region of interest" description="Disordered" evidence="3">
    <location>
        <begin position="484"/>
        <end position="505"/>
    </location>
</feature>
<feature type="mutagenesis site" description="Complete loss of proton channel activity." evidence="6">
    <original>E</original>
    <variation>A</variation>
    <location>
        <position position="267"/>
    </location>
</feature>
<feature type="mutagenesis site" description="Abolishes homodimerization. Impairs surface expression." evidence="6">
    <original>W</original>
    <variation>A</variation>
    <location>
        <position position="394"/>
    </location>
</feature>
<feature type="mutagenesis site" description="Abolishes homodimerization. Impairs surface expression." evidence="6">
    <original>W</original>
    <variation>A</variation>
    <location>
        <position position="398"/>
    </location>
</feature>
<feature type="mutagenesis site" description="In backstroke; causes otolith agenesis." evidence="4">
    <original>E</original>
    <variation>V</variation>
    <location>
        <position position="429"/>
    </location>
</feature>
<feature type="mutagenesis site" description="Abolishes proton channel activity." evidence="6">
    <original>H</original>
    <variation>A</variation>
    <location>
        <position position="574"/>
    </location>
</feature>
<feature type="sequence conflict" description="In Ref. 3; AAH83445/AAI64660." evidence="10" ref="3">
    <original>T</original>
    <variation>A</variation>
    <location>
        <position position="171"/>
    </location>
</feature>
<feature type="sequence conflict" description="In Ref. 1; AAN62756." evidence="10" ref="1">
    <original>CS</original>
    <variation>WL</variation>
    <location>
        <begin position="251"/>
        <end position="252"/>
    </location>
</feature>
<feature type="sequence conflict" description="In Ref. 3; AAH83445/AAI64660." evidence="10" ref="3">
    <original>S</original>
    <variation>T</variation>
    <location>
        <position position="300"/>
    </location>
</feature>
<protein>
    <recommendedName>
        <fullName evidence="10">Proton channel OTOP1</fullName>
    </recommendedName>
    <alternativeName>
        <fullName evidence="9">Otopetrin-1</fullName>
    </alternativeName>
</protein>
<evidence type="ECO:0000250" key="1">
    <source>
        <dbReference type="UniProtKB" id="Q80VM9"/>
    </source>
</evidence>
<evidence type="ECO:0000255" key="2"/>
<evidence type="ECO:0000256" key="3">
    <source>
        <dbReference type="SAM" id="MobiDB-lite"/>
    </source>
</evidence>
<evidence type="ECO:0000269" key="4">
    <source>
    </source>
</evidence>
<evidence type="ECO:0000269" key="5">
    <source>
    </source>
</evidence>
<evidence type="ECO:0000269" key="6">
    <source>
    </source>
</evidence>
<evidence type="ECO:0000269" key="7">
    <source>
    </source>
</evidence>
<evidence type="ECO:0000269" key="8">
    <source>
    </source>
</evidence>
<evidence type="ECO:0000303" key="9">
    <source>
    </source>
</evidence>
<evidence type="ECO:0000305" key="10"/>
<evidence type="ECO:0000305" key="11">
    <source>
    </source>
</evidence>
<reference key="1">
    <citation type="journal article" date="2003" name="Hum. Mol. Genet.">
        <title>Non-syndromic vestibular disorder with otoconial agenesis in tilted/mergulhador mice caused by mutations in otopetrin 1.</title>
        <authorList>
            <person name="Hurle B."/>
            <person name="Ignatova E."/>
            <person name="Massironi S.M."/>
            <person name="Mashimo T."/>
            <person name="Rios X."/>
            <person name="Thalmann I."/>
            <person name="Thalmann R."/>
            <person name="Ornitz D.M."/>
        </authorList>
    </citation>
    <scope>NUCLEOTIDE SEQUENCE [MRNA]</scope>
    <source>
        <tissue>Embryo</tissue>
    </source>
</reference>
<reference key="2">
    <citation type="journal article" date="2004" name="Dev. Genes Evol.">
        <title>Mutated otopetrin 1 affects the genesis of otoliths and the localization of Starmaker in zebrafish.</title>
        <authorList>
            <person name="Soellner C."/>
            <person name="Schwarz H."/>
            <person name="Geisler R."/>
            <person name="Nicolson T."/>
        </authorList>
    </citation>
    <scope>NUCLEOTIDE SEQUENCE [MRNA]</scope>
    <scope>FUNCTION</scope>
    <scope>DEVELOPMENTAL STAGE</scope>
    <scope>SUBCELLULAR LOCATION</scope>
    <scope>MUTAGENESIS OF GLU-429</scope>
    <scope>DISRUPTION PHENOTYPE</scope>
</reference>
<reference key="3">
    <citation type="submission" date="2004-10" db="EMBL/GenBank/DDBJ databases">
        <authorList>
            <consortium name="NIH - Zebrafish Gene Collection (ZGC) project"/>
        </authorList>
    </citation>
    <scope>NUCLEOTIDE SEQUENCE [LARGE SCALE MRNA]</scope>
    <source>
        <tissue>Larva</tissue>
    </source>
</reference>
<reference key="4">
    <citation type="journal article" date="1996" name="Development">
        <title>Mutations affecting development of the zebrafish inner ear and lateral line.</title>
        <authorList>
            <person name="Whitfield T.T."/>
            <person name="Granato M."/>
            <person name="van Eeden F.J."/>
            <person name="Schach U."/>
            <person name="Brand M."/>
            <person name="Furutani-Seiki M."/>
            <person name="Haffter P."/>
            <person name="Hammerschmidt M."/>
            <person name="Heisenberg C.P."/>
            <person name="Jiang Y.J."/>
            <person name="Kane D.A."/>
            <person name="Kelsh R.N."/>
            <person name="Mullins M.C."/>
            <person name="Odenthal J."/>
            <person name="Nuesslein-Volhard C."/>
        </authorList>
    </citation>
    <scope>DISRUPTION PHENOTYPE</scope>
</reference>
<reference key="5">
    <citation type="journal article" date="2004" name="Dev. Biol.">
        <title>Otopetrin 1 is required for otolith formation in the zebrafish Danio rerio.</title>
        <authorList>
            <person name="Hughes I."/>
            <person name="Blasiole B."/>
            <person name="Huss D."/>
            <person name="Warchol M.E."/>
            <person name="Rath N.P."/>
            <person name="Hurle B."/>
            <person name="Ignatova E."/>
            <person name="Dickman J.D."/>
            <person name="Thalmann R."/>
            <person name="Levenson R."/>
            <person name="Ornitz D.M."/>
        </authorList>
    </citation>
    <scope>FUNCTION</scope>
    <scope>DEVELOPMENTAL STAGE</scope>
    <scope>DISRUPTION PHENOTYPE</scope>
</reference>
<reference key="6">
    <citation type="journal article" date="2019" name="Nat. Struct. Mol. Biol.">
        <title>Structures of the otopetrin proton channels Otop1 and Otop3.</title>
        <authorList>
            <person name="Saotome K."/>
            <person name="Teng B."/>
            <person name="Tsui C.C.A."/>
            <person name="Lee W.H."/>
            <person name="Tu Y.H."/>
            <person name="Kaplan J.P."/>
            <person name="Sansom M.S.P."/>
            <person name="Liman E.R."/>
            <person name="Ward A.B."/>
        </authorList>
    </citation>
    <scope>STRUCTURE BY ELECTRON MICROSCOPY (2.98 ANGSTROMS)</scope>
    <scope>SUBUNIT</scope>
    <scope>FUNCTION</scope>
    <scope>TRANSPORTER ACTIVITY</scope>
    <scope>TOPOLOGY</scope>
    <scope>MUTAGENESIS OF GLU-267; TRP-394; TRP-398 AND HIS-574</scope>
</reference>
<reference key="7">
    <citation type="journal article" date="2023" name="Nat. Commun.">
        <title>The proton channel OTOP1 is a sensor for the taste of ammonium chloride.</title>
        <authorList>
            <person name="Liang Z."/>
            <person name="Wilson C.E."/>
            <person name="Teng B."/>
            <person name="Kinnamon S.C."/>
            <person name="Liman E.R."/>
        </authorList>
    </citation>
    <scope>FUNCTION</scope>
    <scope>TRANSPORTER ACTIVITY</scope>
    <scope>ACTIVITY REGULATION</scope>
</reference>
<organism>
    <name type="scientific">Danio rerio</name>
    <name type="common">Zebrafish</name>
    <name type="synonym">Brachydanio rerio</name>
    <dbReference type="NCBI Taxonomy" id="7955"/>
    <lineage>
        <taxon>Eukaryota</taxon>
        <taxon>Metazoa</taxon>
        <taxon>Chordata</taxon>
        <taxon>Craniata</taxon>
        <taxon>Vertebrata</taxon>
        <taxon>Euteleostomi</taxon>
        <taxon>Actinopterygii</taxon>
        <taxon>Neopterygii</taxon>
        <taxon>Teleostei</taxon>
        <taxon>Ostariophysi</taxon>
        <taxon>Cypriniformes</taxon>
        <taxon>Danionidae</taxon>
        <taxon>Danioninae</taxon>
        <taxon>Danio</taxon>
    </lineage>
</organism>
<accession>Q7ZWK8</accession>
<accession>B2GQA4</accession>
<accession>Q5MKL8</accession>
<accession>Q5XJ61</accession>
<name>OTOP1_DANRE</name>
<sequence>MVEHGGTDSMWLNKYNPAAASSASSSSSSDAENKLFSRLKVSLTKKYPQKNAELLSAQYGTNLLLLGVSVMLALAAQSGPVKEEHLLSFITVLMLVQLVWMLCYMIRRERERSPVPERDAHAGASWIRGGLTMLALLSLIMDAFRIGYFVGYHSCISAALGVYPIVHALHTISQVHFLWFHIKDVIKKYETFERFGVIHAVFTNLLLWCNGVMSETEHFMHNHRRRLIEMGYANLSTVDVQPHCNCTTSVCSMFSTSLYYLYPFNIEYHIFVSAMLFVMWKNIGRTLDRHSNRKRRSTGSTGLLLGPLGGLVALASSVSVLVVYLIHLEKTEEMHEAAVSMFYYYGVAMMACMCVGSGTGLLVYRMENRPMDTGSNPARTLDTELLLASSLGSWLMSWCSVVASVAEAGQKSPSFSWTSLTYSLLLVLEKCIQNLFIVESLYRRHSEEEEDAAAPQVFSVAVPPYDGILNHGYEAHDKHREAEPAAGSHALSRKQPDAPLPAGQRLDVTPGRKRQILKNICMFLFMCNISLWILPAFGCRPQYDNPLENETFGTSVWTTVLNVAIPLNLFYRMHSVASLFEVFRKV</sequence>
<proteinExistence type="evidence at protein level"/>